<keyword id="KW-1185">Reference proteome</keyword>
<sequence length="337" mass="39740">MSISELSQDLLEEILCRVPAISLKKLRSTCKLWNSLFIDKRVRNELRRVTVSQVFHCDGLLLYINGVDTIMVVWNPFMGQTRWVQPIARDQTHKYVLGSYQDIKSRITSYKILRYRYTLCGSKLAFEICELYSSSWRVLDITMDFDLYHNSCVSLKGKTYWLTFDKKDRELDMFSFDYATESFGNRMPLPYQFPRCSYETVALSVVREEKLSVLLQLRGTSRKEIWVTNKINETTQVLSWSKVLTLDNSDFGYCPGLSFFVDEEKKQVLCFEKCRVFHIHTNDEVFENKVYTVGEDNKVTQLRFEQSFCPKMDPYVFGYVPSLVQIEQPRRKRKRGD</sequence>
<gene>
    <name type="ordered locus">At4g09870</name>
    <name type="ORF">F17A8.220</name>
</gene>
<evidence type="ECO:0000255" key="1">
    <source>
        <dbReference type="PROSITE-ProRule" id="PRU00080"/>
    </source>
</evidence>
<accession>Q9SZA2</accession>
<organism>
    <name type="scientific">Arabidopsis thaliana</name>
    <name type="common">Mouse-ear cress</name>
    <dbReference type="NCBI Taxonomy" id="3702"/>
    <lineage>
        <taxon>Eukaryota</taxon>
        <taxon>Viridiplantae</taxon>
        <taxon>Streptophyta</taxon>
        <taxon>Embryophyta</taxon>
        <taxon>Tracheophyta</taxon>
        <taxon>Spermatophyta</taxon>
        <taxon>Magnoliopsida</taxon>
        <taxon>eudicotyledons</taxon>
        <taxon>Gunneridae</taxon>
        <taxon>Pentapetalae</taxon>
        <taxon>rosids</taxon>
        <taxon>malvids</taxon>
        <taxon>Brassicales</taxon>
        <taxon>Brassicaceae</taxon>
        <taxon>Camelineae</taxon>
        <taxon>Arabidopsis</taxon>
    </lineage>
</organism>
<name>FB225_ARATH</name>
<dbReference type="EMBL" id="AL049482">
    <property type="protein sequence ID" value="CAB39654.1"/>
    <property type="molecule type" value="Genomic_DNA"/>
</dbReference>
<dbReference type="EMBL" id="AL161516">
    <property type="protein sequence ID" value="CAB78110.1"/>
    <property type="molecule type" value="Genomic_DNA"/>
</dbReference>
<dbReference type="EMBL" id="CP002687">
    <property type="protein sequence ID" value="AEE82808.1"/>
    <property type="molecule type" value="Genomic_DNA"/>
</dbReference>
<dbReference type="PIR" id="T04035">
    <property type="entry name" value="T04035"/>
</dbReference>
<dbReference type="RefSeq" id="NP_192725.1">
    <property type="nucleotide sequence ID" value="NM_117055.1"/>
</dbReference>
<dbReference type="PaxDb" id="3702-AT4G09870.1"/>
<dbReference type="EnsemblPlants" id="AT4G09870.1">
    <property type="protein sequence ID" value="AT4G09870.1"/>
    <property type="gene ID" value="AT4G09870"/>
</dbReference>
<dbReference type="GeneID" id="826576"/>
<dbReference type="Gramene" id="AT4G09870.1">
    <property type="protein sequence ID" value="AT4G09870.1"/>
    <property type="gene ID" value="AT4G09870"/>
</dbReference>
<dbReference type="KEGG" id="ath:AT4G09870"/>
<dbReference type="Araport" id="AT4G09870"/>
<dbReference type="TAIR" id="AT4G09870"/>
<dbReference type="HOGENOM" id="CLU_034692_1_0_1"/>
<dbReference type="InParanoid" id="Q9SZA2"/>
<dbReference type="OMA" id="RKEIWVT"/>
<dbReference type="PhylomeDB" id="Q9SZA2"/>
<dbReference type="PRO" id="PR:Q9SZA2"/>
<dbReference type="Proteomes" id="UP000006548">
    <property type="component" value="Chromosome 4"/>
</dbReference>
<dbReference type="ExpressionAtlas" id="Q9SZA2">
    <property type="expression patterns" value="baseline and differential"/>
</dbReference>
<dbReference type="Gene3D" id="1.20.1280.50">
    <property type="match status" value="1"/>
</dbReference>
<dbReference type="InterPro" id="IPR006527">
    <property type="entry name" value="F-box-assoc_dom_typ1"/>
</dbReference>
<dbReference type="InterPro" id="IPR017451">
    <property type="entry name" value="F-box-assoc_interact_dom"/>
</dbReference>
<dbReference type="InterPro" id="IPR036047">
    <property type="entry name" value="F-box-like_dom_sf"/>
</dbReference>
<dbReference type="InterPro" id="IPR001810">
    <property type="entry name" value="F-box_dom"/>
</dbReference>
<dbReference type="InterPro" id="IPR011043">
    <property type="entry name" value="Gal_Oxase/kelch_b-propeller"/>
</dbReference>
<dbReference type="InterPro" id="IPR050796">
    <property type="entry name" value="SCF_F-box_component"/>
</dbReference>
<dbReference type="NCBIfam" id="TIGR01640">
    <property type="entry name" value="F_box_assoc_1"/>
    <property type="match status" value="1"/>
</dbReference>
<dbReference type="PANTHER" id="PTHR31672">
    <property type="entry name" value="BNACNNG10540D PROTEIN"/>
    <property type="match status" value="1"/>
</dbReference>
<dbReference type="PANTHER" id="PTHR31672:SF13">
    <property type="entry name" value="F-BOX PROTEIN CPR30-LIKE"/>
    <property type="match status" value="1"/>
</dbReference>
<dbReference type="Pfam" id="PF00646">
    <property type="entry name" value="F-box"/>
    <property type="match status" value="1"/>
</dbReference>
<dbReference type="Pfam" id="PF07734">
    <property type="entry name" value="FBA_1"/>
    <property type="match status" value="1"/>
</dbReference>
<dbReference type="SMART" id="SM00256">
    <property type="entry name" value="FBOX"/>
    <property type="match status" value="1"/>
</dbReference>
<dbReference type="SUPFAM" id="SSF81383">
    <property type="entry name" value="F-box domain"/>
    <property type="match status" value="1"/>
</dbReference>
<dbReference type="SUPFAM" id="SSF50965">
    <property type="entry name" value="Galactose oxidase, central domain"/>
    <property type="match status" value="1"/>
</dbReference>
<dbReference type="PROSITE" id="PS50181">
    <property type="entry name" value="FBOX"/>
    <property type="match status" value="1"/>
</dbReference>
<proteinExistence type="predicted"/>
<feature type="chain" id="PRO_0000283494" description="Putative F-box protein At4g09870">
    <location>
        <begin position="1"/>
        <end position="337"/>
    </location>
</feature>
<feature type="domain" description="F-box" evidence="1">
    <location>
        <begin position="1"/>
        <end position="46"/>
    </location>
</feature>
<protein>
    <recommendedName>
        <fullName>Putative F-box protein At4g09870</fullName>
    </recommendedName>
</protein>
<reference key="1">
    <citation type="journal article" date="1999" name="Nature">
        <title>Sequence and analysis of chromosome 4 of the plant Arabidopsis thaliana.</title>
        <authorList>
            <person name="Mayer K.F.X."/>
            <person name="Schueller C."/>
            <person name="Wambutt R."/>
            <person name="Murphy G."/>
            <person name="Volckaert G."/>
            <person name="Pohl T."/>
            <person name="Duesterhoeft A."/>
            <person name="Stiekema W."/>
            <person name="Entian K.-D."/>
            <person name="Terryn N."/>
            <person name="Harris B."/>
            <person name="Ansorge W."/>
            <person name="Brandt P."/>
            <person name="Grivell L.A."/>
            <person name="Rieger M."/>
            <person name="Weichselgartner M."/>
            <person name="de Simone V."/>
            <person name="Obermaier B."/>
            <person name="Mache R."/>
            <person name="Mueller M."/>
            <person name="Kreis M."/>
            <person name="Delseny M."/>
            <person name="Puigdomenech P."/>
            <person name="Watson M."/>
            <person name="Schmidtheini T."/>
            <person name="Reichert B."/>
            <person name="Portetelle D."/>
            <person name="Perez-Alonso M."/>
            <person name="Boutry M."/>
            <person name="Bancroft I."/>
            <person name="Vos P."/>
            <person name="Hoheisel J."/>
            <person name="Zimmermann W."/>
            <person name="Wedler H."/>
            <person name="Ridley P."/>
            <person name="Langham S.-A."/>
            <person name="McCullagh B."/>
            <person name="Bilham L."/>
            <person name="Robben J."/>
            <person name="van der Schueren J."/>
            <person name="Grymonprez B."/>
            <person name="Chuang Y.-J."/>
            <person name="Vandenbussche F."/>
            <person name="Braeken M."/>
            <person name="Weltjens I."/>
            <person name="Voet M."/>
            <person name="Bastiaens I."/>
            <person name="Aert R."/>
            <person name="Defoor E."/>
            <person name="Weitzenegger T."/>
            <person name="Bothe G."/>
            <person name="Ramsperger U."/>
            <person name="Hilbert H."/>
            <person name="Braun M."/>
            <person name="Holzer E."/>
            <person name="Brandt A."/>
            <person name="Peters S."/>
            <person name="van Staveren M."/>
            <person name="Dirkse W."/>
            <person name="Mooijman P."/>
            <person name="Klein Lankhorst R."/>
            <person name="Rose M."/>
            <person name="Hauf J."/>
            <person name="Koetter P."/>
            <person name="Berneiser S."/>
            <person name="Hempel S."/>
            <person name="Feldpausch M."/>
            <person name="Lamberth S."/>
            <person name="Van den Daele H."/>
            <person name="De Keyser A."/>
            <person name="Buysshaert C."/>
            <person name="Gielen J."/>
            <person name="Villarroel R."/>
            <person name="De Clercq R."/>
            <person name="van Montagu M."/>
            <person name="Rogers J."/>
            <person name="Cronin A."/>
            <person name="Quail M.A."/>
            <person name="Bray-Allen S."/>
            <person name="Clark L."/>
            <person name="Doggett J."/>
            <person name="Hall S."/>
            <person name="Kay M."/>
            <person name="Lennard N."/>
            <person name="McLay K."/>
            <person name="Mayes R."/>
            <person name="Pettett A."/>
            <person name="Rajandream M.A."/>
            <person name="Lyne M."/>
            <person name="Benes V."/>
            <person name="Rechmann S."/>
            <person name="Borkova D."/>
            <person name="Bloecker H."/>
            <person name="Scharfe M."/>
            <person name="Grimm M."/>
            <person name="Loehnert T.-H."/>
            <person name="Dose S."/>
            <person name="de Haan M."/>
            <person name="Maarse A.C."/>
            <person name="Schaefer M."/>
            <person name="Mueller-Auer S."/>
            <person name="Gabel C."/>
            <person name="Fuchs M."/>
            <person name="Fartmann B."/>
            <person name="Granderath K."/>
            <person name="Dauner D."/>
            <person name="Herzl A."/>
            <person name="Neumann S."/>
            <person name="Argiriou A."/>
            <person name="Vitale D."/>
            <person name="Liguori R."/>
            <person name="Piravandi E."/>
            <person name="Massenet O."/>
            <person name="Quigley F."/>
            <person name="Clabauld G."/>
            <person name="Muendlein A."/>
            <person name="Felber R."/>
            <person name="Schnabl S."/>
            <person name="Hiller R."/>
            <person name="Schmidt W."/>
            <person name="Lecharny A."/>
            <person name="Aubourg S."/>
            <person name="Chefdor F."/>
            <person name="Cooke R."/>
            <person name="Berger C."/>
            <person name="Monfort A."/>
            <person name="Casacuberta E."/>
            <person name="Gibbons T."/>
            <person name="Weber N."/>
            <person name="Vandenbol M."/>
            <person name="Bargues M."/>
            <person name="Terol J."/>
            <person name="Torres A."/>
            <person name="Perez-Perez A."/>
            <person name="Purnelle B."/>
            <person name="Bent E."/>
            <person name="Johnson S."/>
            <person name="Tacon D."/>
            <person name="Jesse T."/>
            <person name="Heijnen L."/>
            <person name="Schwarz S."/>
            <person name="Scholler P."/>
            <person name="Heber S."/>
            <person name="Francs P."/>
            <person name="Bielke C."/>
            <person name="Frishman D."/>
            <person name="Haase D."/>
            <person name="Lemcke K."/>
            <person name="Mewes H.-W."/>
            <person name="Stocker S."/>
            <person name="Zaccaria P."/>
            <person name="Bevan M."/>
            <person name="Wilson R.K."/>
            <person name="de la Bastide M."/>
            <person name="Habermann K."/>
            <person name="Parnell L."/>
            <person name="Dedhia N."/>
            <person name="Gnoj L."/>
            <person name="Schutz K."/>
            <person name="Huang E."/>
            <person name="Spiegel L."/>
            <person name="Sekhon M."/>
            <person name="Murray J."/>
            <person name="Sheet P."/>
            <person name="Cordes M."/>
            <person name="Abu-Threideh J."/>
            <person name="Stoneking T."/>
            <person name="Kalicki J."/>
            <person name="Graves T."/>
            <person name="Harmon G."/>
            <person name="Edwards J."/>
            <person name="Latreille P."/>
            <person name="Courtney L."/>
            <person name="Cloud J."/>
            <person name="Abbott A."/>
            <person name="Scott K."/>
            <person name="Johnson D."/>
            <person name="Minx P."/>
            <person name="Bentley D."/>
            <person name="Fulton B."/>
            <person name="Miller N."/>
            <person name="Greco T."/>
            <person name="Kemp K."/>
            <person name="Kramer J."/>
            <person name="Fulton L."/>
            <person name="Mardis E."/>
            <person name="Dante M."/>
            <person name="Pepin K."/>
            <person name="Hillier L.W."/>
            <person name="Nelson J."/>
            <person name="Spieth J."/>
            <person name="Ryan E."/>
            <person name="Andrews S."/>
            <person name="Geisel C."/>
            <person name="Layman D."/>
            <person name="Du H."/>
            <person name="Ali J."/>
            <person name="Berghoff A."/>
            <person name="Jones K."/>
            <person name="Drone K."/>
            <person name="Cotton M."/>
            <person name="Joshu C."/>
            <person name="Antonoiu B."/>
            <person name="Zidanic M."/>
            <person name="Strong C."/>
            <person name="Sun H."/>
            <person name="Lamar B."/>
            <person name="Yordan C."/>
            <person name="Ma P."/>
            <person name="Zhong J."/>
            <person name="Preston R."/>
            <person name="Vil D."/>
            <person name="Shekher M."/>
            <person name="Matero A."/>
            <person name="Shah R."/>
            <person name="Swaby I.K."/>
            <person name="O'Shaughnessy A."/>
            <person name="Rodriguez M."/>
            <person name="Hoffman J."/>
            <person name="Till S."/>
            <person name="Granat S."/>
            <person name="Shohdy N."/>
            <person name="Hasegawa A."/>
            <person name="Hameed A."/>
            <person name="Lodhi M."/>
            <person name="Johnson A."/>
            <person name="Chen E."/>
            <person name="Marra M.A."/>
            <person name="Martienssen R."/>
            <person name="McCombie W.R."/>
        </authorList>
    </citation>
    <scope>NUCLEOTIDE SEQUENCE [LARGE SCALE GENOMIC DNA]</scope>
    <source>
        <strain>cv. Columbia</strain>
    </source>
</reference>
<reference key="2">
    <citation type="journal article" date="2017" name="Plant J.">
        <title>Araport11: a complete reannotation of the Arabidopsis thaliana reference genome.</title>
        <authorList>
            <person name="Cheng C.Y."/>
            <person name="Krishnakumar V."/>
            <person name="Chan A.P."/>
            <person name="Thibaud-Nissen F."/>
            <person name="Schobel S."/>
            <person name="Town C.D."/>
        </authorList>
    </citation>
    <scope>GENOME REANNOTATION</scope>
    <source>
        <strain>cv. Columbia</strain>
    </source>
</reference>